<feature type="chain" id="PRO_0000081822" description="Heterogeneous nuclear ribonucleoprotein A2 homolog 1">
    <location>
        <begin position="1"/>
        <end position="346"/>
    </location>
</feature>
<feature type="domain" description="RRM 1" evidence="2">
    <location>
        <begin position="9"/>
        <end position="92"/>
    </location>
</feature>
<feature type="domain" description="RRM 2" evidence="2">
    <location>
        <begin position="100"/>
        <end position="179"/>
    </location>
</feature>
<feature type="region of interest" description="Disordered" evidence="3">
    <location>
        <begin position="182"/>
        <end position="217"/>
    </location>
</feature>
<feature type="region of interest" description="Nuclear targeting sequence" evidence="1">
    <location>
        <begin position="297"/>
        <end position="340"/>
    </location>
</feature>
<feature type="region of interest" description="Disordered" evidence="3">
    <location>
        <begin position="326"/>
        <end position="346"/>
    </location>
</feature>
<feature type="compositionally biased region" description="Gly residues" evidence="3">
    <location>
        <begin position="193"/>
        <end position="217"/>
    </location>
</feature>
<name>RO21_XENLA</name>
<evidence type="ECO:0000250" key="1"/>
<evidence type="ECO:0000255" key="2">
    <source>
        <dbReference type="PROSITE-ProRule" id="PRU00176"/>
    </source>
</evidence>
<evidence type="ECO:0000256" key="3">
    <source>
        <dbReference type="SAM" id="MobiDB-lite"/>
    </source>
</evidence>
<accession>P51989</accession>
<dbReference type="EMBL" id="L02954">
    <property type="protein sequence ID" value="AAA49948.1"/>
    <property type="molecule type" value="mRNA"/>
</dbReference>
<dbReference type="PIR" id="S40775">
    <property type="entry name" value="S40775"/>
</dbReference>
<dbReference type="SMR" id="P51989"/>
<dbReference type="AGR" id="Xenbase:XB-GENE-490997"/>
<dbReference type="Xenbase" id="XB-GENE-490997">
    <property type="gene designation" value="hnrnpa2b1.S"/>
</dbReference>
<dbReference type="OMA" id="MDFNRYM"/>
<dbReference type="Proteomes" id="UP000186698">
    <property type="component" value="Unplaced"/>
</dbReference>
<dbReference type="GO" id="GO:0071013">
    <property type="term" value="C:catalytic step 2 spliceosome"/>
    <property type="evidence" value="ECO:0000318"/>
    <property type="project" value="GO_Central"/>
</dbReference>
<dbReference type="GO" id="GO:0003730">
    <property type="term" value="F:mRNA 3'-UTR binding"/>
    <property type="evidence" value="ECO:0007669"/>
    <property type="project" value="TreeGrafter"/>
</dbReference>
<dbReference type="GO" id="GO:0000398">
    <property type="term" value="P:mRNA splicing, via spliceosome"/>
    <property type="evidence" value="ECO:0000318"/>
    <property type="project" value="GO_Central"/>
</dbReference>
<dbReference type="CDD" id="cd12762">
    <property type="entry name" value="RRM1_hnRNPA2B1"/>
    <property type="match status" value="1"/>
</dbReference>
<dbReference type="CDD" id="cd12581">
    <property type="entry name" value="RRM2_hnRNPA2B1"/>
    <property type="match status" value="1"/>
</dbReference>
<dbReference type="FunFam" id="3.30.70.330:FF:000040">
    <property type="entry name" value="Heterogeneous nuclear ribonucleoprotein A2/B1"/>
    <property type="match status" value="1"/>
</dbReference>
<dbReference type="FunFam" id="3.30.70.330:FF:000108">
    <property type="entry name" value="Heterogeneous nuclear ribonucleoproteins A2/B1"/>
    <property type="match status" value="1"/>
</dbReference>
<dbReference type="Gene3D" id="3.30.70.330">
    <property type="match status" value="2"/>
</dbReference>
<dbReference type="InterPro" id="IPR034486">
    <property type="entry name" value="hnRNPA2B1_RRM1"/>
</dbReference>
<dbReference type="InterPro" id="IPR012677">
    <property type="entry name" value="Nucleotide-bd_a/b_plait_sf"/>
</dbReference>
<dbReference type="InterPro" id="IPR035979">
    <property type="entry name" value="RBD_domain_sf"/>
</dbReference>
<dbReference type="InterPro" id="IPR000504">
    <property type="entry name" value="RRM_dom"/>
</dbReference>
<dbReference type="PANTHER" id="PTHR48026:SF13">
    <property type="entry name" value="HETEROGENEOUS NUCLEAR RIBONUCLEOPROTEINS A2_B1"/>
    <property type="match status" value="1"/>
</dbReference>
<dbReference type="PANTHER" id="PTHR48026">
    <property type="entry name" value="HOMOLOGOUS TO DROSOPHILA SQD (SQUID) PROTEIN"/>
    <property type="match status" value="1"/>
</dbReference>
<dbReference type="Pfam" id="PF00076">
    <property type="entry name" value="RRM_1"/>
    <property type="match status" value="2"/>
</dbReference>
<dbReference type="SMART" id="SM00360">
    <property type="entry name" value="RRM"/>
    <property type="match status" value="2"/>
</dbReference>
<dbReference type="SUPFAM" id="SSF54928">
    <property type="entry name" value="RNA-binding domain, RBD"/>
    <property type="match status" value="2"/>
</dbReference>
<dbReference type="PROSITE" id="PS50102">
    <property type="entry name" value="RRM"/>
    <property type="match status" value="2"/>
</dbReference>
<organism>
    <name type="scientific">Xenopus laevis</name>
    <name type="common">African clawed frog</name>
    <dbReference type="NCBI Taxonomy" id="8355"/>
    <lineage>
        <taxon>Eukaryota</taxon>
        <taxon>Metazoa</taxon>
        <taxon>Chordata</taxon>
        <taxon>Craniata</taxon>
        <taxon>Vertebrata</taxon>
        <taxon>Euteleostomi</taxon>
        <taxon>Amphibia</taxon>
        <taxon>Batrachia</taxon>
        <taxon>Anura</taxon>
        <taxon>Pipoidea</taxon>
        <taxon>Pipidae</taxon>
        <taxon>Xenopodinae</taxon>
        <taxon>Xenopus</taxon>
        <taxon>Xenopus</taxon>
    </lineage>
</organism>
<comment type="function">
    <text evidence="1">Forms complexes (ribonucleosomes) with at least 20 other different hnRNP and heterogeneous nuclear RNA in the nucleus.</text>
</comment>
<comment type="subcellular location">
    <subcellularLocation>
        <location>Nucleus</location>
    </subcellularLocation>
    <text>Component of ribonucleosomes.</text>
</comment>
<protein>
    <recommendedName>
        <fullName>Heterogeneous nuclear ribonucleoprotein A2 homolog 1</fullName>
    </recommendedName>
    <alternativeName>
        <fullName>hnRNP A2(A)</fullName>
    </alternativeName>
</protein>
<sequence length="346" mass="36559">MEREKEQFRKLFIGGLSFETTEESLRNYYEQWGTLTDCVVMRDPASKRSRGFGFVTFSCMNEVDAAMATRPHTIDGRVVEPKRAVAREESAKPGAHVTVKKLFVGGIKEDTEEHHLREYFEEYGKIDSIEIITDKQSGKKRGFAFVTFDDHDPVDKIVLQKYHTINGHNAEVRKALSKQEMQDVQNTRNNRGGNFGFGDSRGGGNFGSGPGGNFRGGSDGYGGGRGYGDNGYNGYGGGQGGGNYGGGPSYGGGRGGGYGGGAGYGNQGGGYGGGYDNYGGGNYGGGGNYNDFGNYNQQSSNYGPMKSGGNFGGNRSMGGGPYGGGNYGPGNASGGNGGGYGGRNRY</sequence>
<reference key="1">
    <citation type="journal article" date="1993" name="Nucleic Acids Res.">
        <title>Three new members of the RNP protein family in Xenopus.</title>
        <authorList>
            <person name="Good P.J."/>
            <person name="Rebbert M.L."/>
            <person name="Dawid I.B."/>
        </authorList>
    </citation>
    <scope>NUCLEOTIDE SEQUENCE [MRNA]</scope>
</reference>
<keyword id="KW-0539">Nucleus</keyword>
<keyword id="KW-1185">Reference proteome</keyword>
<keyword id="KW-0677">Repeat</keyword>
<keyword id="KW-0687">Ribonucleoprotein</keyword>
<keyword id="KW-0694">RNA-binding</keyword>
<proteinExistence type="evidence at transcript level"/>